<comment type="function">
    <text evidence="1">The glycine cleavage system catalyzes the degradation of glycine. The H protein shuttles the methylamine group of glycine from the P protein to the T protein.</text>
</comment>
<comment type="cofactor">
    <cofactor evidence="1">
        <name>(R)-lipoate</name>
        <dbReference type="ChEBI" id="CHEBI:83088"/>
    </cofactor>
    <text evidence="1">Binds 1 lipoyl cofactor covalently.</text>
</comment>
<comment type="subunit">
    <text evidence="1">The glycine cleavage system is composed of four proteins: P, T, L and H.</text>
</comment>
<comment type="similarity">
    <text evidence="1">Belongs to the GcvH family.</text>
</comment>
<gene>
    <name evidence="1" type="primary">gcvH</name>
    <name type="ordered locus">CbuK_0293</name>
</gene>
<dbReference type="EMBL" id="CP001020">
    <property type="protein sequence ID" value="ACJ19601.1"/>
    <property type="molecule type" value="Genomic_DNA"/>
</dbReference>
<dbReference type="RefSeq" id="WP_005770508.1">
    <property type="nucleotide sequence ID" value="NC_011528.1"/>
</dbReference>
<dbReference type="SMR" id="B6J4T6"/>
<dbReference type="KEGG" id="cbc:CbuK_0293"/>
<dbReference type="HOGENOM" id="CLU_097408_2_1_6"/>
<dbReference type="GO" id="GO:0005829">
    <property type="term" value="C:cytosol"/>
    <property type="evidence" value="ECO:0007669"/>
    <property type="project" value="TreeGrafter"/>
</dbReference>
<dbReference type="GO" id="GO:0005960">
    <property type="term" value="C:glycine cleavage complex"/>
    <property type="evidence" value="ECO:0007669"/>
    <property type="project" value="InterPro"/>
</dbReference>
<dbReference type="GO" id="GO:0019464">
    <property type="term" value="P:glycine decarboxylation via glycine cleavage system"/>
    <property type="evidence" value="ECO:0007669"/>
    <property type="project" value="UniProtKB-UniRule"/>
</dbReference>
<dbReference type="CDD" id="cd06848">
    <property type="entry name" value="GCS_H"/>
    <property type="match status" value="1"/>
</dbReference>
<dbReference type="Gene3D" id="2.40.50.100">
    <property type="match status" value="1"/>
</dbReference>
<dbReference type="HAMAP" id="MF_00272">
    <property type="entry name" value="GcvH"/>
    <property type="match status" value="1"/>
</dbReference>
<dbReference type="InterPro" id="IPR003016">
    <property type="entry name" value="2-oxoA_DH_lipoyl-BS"/>
</dbReference>
<dbReference type="InterPro" id="IPR000089">
    <property type="entry name" value="Biotin_lipoyl"/>
</dbReference>
<dbReference type="InterPro" id="IPR002930">
    <property type="entry name" value="GCV_H"/>
</dbReference>
<dbReference type="InterPro" id="IPR033753">
    <property type="entry name" value="GCV_H/Fam206"/>
</dbReference>
<dbReference type="InterPro" id="IPR017453">
    <property type="entry name" value="GCV_H_sub"/>
</dbReference>
<dbReference type="InterPro" id="IPR011053">
    <property type="entry name" value="Single_hybrid_motif"/>
</dbReference>
<dbReference type="NCBIfam" id="TIGR00527">
    <property type="entry name" value="gcvH"/>
    <property type="match status" value="1"/>
</dbReference>
<dbReference type="NCBIfam" id="NF002270">
    <property type="entry name" value="PRK01202.1"/>
    <property type="match status" value="1"/>
</dbReference>
<dbReference type="PANTHER" id="PTHR11715">
    <property type="entry name" value="GLYCINE CLEAVAGE SYSTEM H PROTEIN"/>
    <property type="match status" value="1"/>
</dbReference>
<dbReference type="PANTHER" id="PTHR11715:SF3">
    <property type="entry name" value="GLYCINE CLEAVAGE SYSTEM H PROTEIN-RELATED"/>
    <property type="match status" value="1"/>
</dbReference>
<dbReference type="Pfam" id="PF01597">
    <property type="entry name" value="GCV_H"/>
    <property type="match status" value="1"/>
</dbReference>
<dbReference type="SUPFAM" id="SSF51230">
    <property type="entry name" value="Single hybrid motif"/>
    <property type="match status" value="1"/>
</dbReference>
<dbReference type="PROSITE" id="PS50968">
    <property type="entry name" value="BIOTINYL_LIPOYL"/>
    <property type="match status" value="1"/>
</dbReference>
<dbReference type="PROSITE" id="PS00189">
    <property type="entry name" value="LIPOYL"/>
    <property type="match status" value="1"/>
</dbReference>
<protein>
    <recommendedName>
        <fullName evidence="1">Glycine cleavage system H protein</fullName>
    </recommendedName>
</protein>
<name>GCSH_COXB1</name>
<sequence length="130" mass="14594">MAEFPAELYYSKNHEWMRKESDETFTVGITDHAQEQLGDLVFVELPETNIHVDAGDEVAVVESVKTAADVYSPLSGKVIEINNALENEPATVNRDPYGDGWLYRITIDDEKELNDLLDADGYQTLIEAES</sequence>
<keyword id="KW-0450">Lipoyl</keyword>
<proteinExistence type="inferred from homology"/>
<accession>B6J4T6</accession>
<organism>
    <name type="scientific">Coxiella burnetii (strain CbuK_Q154)</name>
    <name type="common">Coxiella burnetii (strain Q154)</name>
    <dbReference type="NCBI Taxonomy" id="434924"/>
    <lineage>
        <taxon>Bacteria</taxon>
        <taxon>Pseudomonadati</taxon>
        <taxon>Pseudomonadota</taxon>
        <taxon>Gammaproteobacteria</taxon>
        <taxon>Legionellales</taxon>
        <taxon>Coxiellaceae</taxon>
        <taxon>Coxiella</taxon>
    </lineage>
</organism>
<reference key="1">
    <citation type="journal article" date="2009" name="Infect. Immun.">
        <title>Comparative genomics reveal extensive transposon-mediated genomic plasticity and diversity among potential effector proteins within the genus Coxiella.</title>
        <authorList>
            <person name="Beare P.A."/>
            <person name="Unsworth N."/>
            <person name="Andoh M."/>
            <person name="Voth D.E."/>
            <person name="Omsland A."/>
            <person name="Gilk S.D."/>
            <person name="Williams K.P."/>
            <person name="Sobral B.W."/>
            <person name="Kupko J.J. III"/>
            <person name="Porcella S.F."/>
            <person name="Samuel J.E."/>
            <person name="Heinzen R.A."/>
        </authorList>
    </citation>
    <scope>NUCLEOTIDE SEQUENCE [LARGE SCALE GENOMIC DNA]</scope>
    <source>
        <strain>CbuK_Q154</strain>
    </source>
</reference>
<evidence type="ECO:0000255" key="1">
    <source>
        <dbReference type="HAMAP-Rule" id="MF_00272"/>
    </source>
</evidence>
<evidence type="ECO:0000255" key="2">
    <source>
        <dbReference type="PROSITE-ProRule" id="PRU01066"/>
    </source>
</evidence>
<feature type="chain" id="PRO_1000114514" description="Glycine cleavage system H protein">
    <location>
        <begin position="1"/>
        <end position="130"/>
    </location>
</feature>
<feature type="domain" description="Lipoyl-binding" evidence="2">
    <location>
        <begin position="24"/>
        <end position="106"/>
    </location>
</feature>
<feature type="modified residue" description="N6-lipoyllysine" evidence="1">
    <location>
        <position position="65"/>
    </location>
</feature>